<evidence type="ECO:0000250" key="1"/>
<evidence type="ECO:0000256" key="2">
    <source>
        <dbReference type="SAM" id="MobiDB-lite"/>
    </source>
</evidence>
<evidence type="ECO:0000305" key="3"/>
<reference key="1">
    <citation type="journal article" date="2009" name="J. Biochem.">
        <title>Structural divergence of cysteine-rich secretory proteins in snake venoms.</title>
        <authorList>
            <person name="Matsunaga Y."/>
            <person name="Yamazaki Y."/>
            <person name="Hyodo F."/>
            <person name="Sugiyama Y."/>
            <person name="Nozaki M."/>
            <person name="Morita T."/>
        </authorList>
    </citation>
    <scope>PROTEIN SEQUENCE</scope>
    <source>
        <tissue>Venom</tissue>
    </source>
</reference>
<keyword id="KW-0108">Calcium channel impairing toxin</keyword>
<keyword id="KW-1221">Calcium-activated potassium channel impairing toxin</keyword>
<keyword id="KW-0903">Direct protein sequencing</keyword>
<keyword id="KW-1015">Disulfide bond</keyword>
<keyword id="KW-0872">Ion channel impairing toxin</keyword>
<keyword id="KW-0632">Potassium channel impairing toxin</keyword>
<keyword id="KW-1219">Ryanodine-sensitive calcium-release channel impairing toxin</keyword>
<keyword id="KW-0964">Secreted</keyword>
<keyword id="KW-0800">Toxin</keyword>
<keyword id="KW-1220">Voltage-gated potassium channel impairing toxin</keyword>
<sequence>SVDFDSESPRKPXIQNEIVDLHNPLRRXVN</sequence>
<accession>P0DL18</accession>
<comment type="function">
    <text evidence="1">Inhibits calcium-activated potassium channels (KCa), voltage-gated potassium channel (Kv), and the calcium release channel/ryanodine receptor (RyR).</text>
</comment>
<comment type="subcellular location">
    <subcellularLocation>
        <location>Secreted</location>
    </subcellularLocation>
</comment>
<comment type="tissue specificity">
    <text>Expressed by the venom gland.</text>
</comment>
<comment type="PTM">
    <text evidence="1">Contains 8 disulfide bonds.</text>
</comment>
<comment type="similarity">
    <text evidence="3">Belongs to the CRISP family.</text>
</comment>
<organism>
    <name type="scientific">Ovophis okinavensis</name>
    <name type="common">Ryukyu Island pit viper</name>
    <name type="synonym">Trimeresurus okinavensis</name>
    <dbReference type="NCBI Taxonomy" id="8769"/>
    <lineage>
        <taxon>Eukaryota</taxon>
        <taxon>Metazoa</taxon>
        <taxon>Chordata</taxon>
        <taxon>Craniata</taxon>
        <taxon>Vertebrata</taxon>
        <taxon>Euteleostomi</taxon>
        <taxon>Lepidosauria</taxon>
        <taxon>Squamata</taxon>
        <taxon>Bifurcata</taxon>
        <taxon>Unidentata</taxon>
        <taxon>Episquamata</taxon>
        <taxon>Toxicofera</taxon>
        <taxon>Serpentes</taxon>
        <taxon>Colubroidea</taxon>
        <taxon>Viperidae</taxon>
        <taxon>Crotalinae</taxon>
        <taxon>Ovophis</taxon>
    </lineage>
</organism>
<proteinExistence type="evidence at protein level"/>
<dbReference type="GO" id="GO:0005576">
    <property type="term" value="C:extracellular region"/>
    <property type="evidence" value="ECO:0007669"/>
    <property type="project" value="UniProtKB-SubCell"/>
</dbReference>
<dbReference type="GO" id="GO:0005246">
    <property type="term" value="F:calcium channel regulator activity"/>
    <property type="evidence" value="ECO:0007669"/>
    <property type="project" value="UniProtKB-KW"/>
</dbReference>
<dbReference type="GO" id="GO:0015459">
    <property type="term" value="F:potassium channel regulator activity"/>
    <property type="evidence" value="ECO:0007669"/>
    <property type="project" value="UniProtKB-KW"/>
</dbReference>
<dbReference type="GO" id="GO:0090729">
    <property type="term" value="F:toxin activity"/>
    <property type="evidence" value="ECO:0007669"/>
    <property type="project" value="UniProtKB-KW"/>
</dbReference>
<name>CRVP_OVOOK</name>
<protein>
    <recommendedName>
        <fullName>Cysteine-rich venom protein okinavin</fullName>
        <shortName>CRVP</shortName>
    </recommendedName>
</protein>
<feature type="chain" id="PRO_0000422148" description="Cysteine-rich venom protein okinavin">
    <location>
        <begin position="1"/>
        <end position="30" status="greater than"/>
    </location>
</feature>
<feature type="region of interest" description="Disordered" evidence="2">
    <location>
        <begin position="1"/>
        <end position="30"/>
    </location>
</feature>
<feature type="non-terminal residue">
    <location>
        <position position="30"/>
    </location>
</feature>